<evidence type="ECO:0000255" key="1">
    <source>
        <dbReference type="HAMAP-Rule" id="MF_00791"/>
    </source>
</evidence>
<accession>Q1GXY8</accession>
<feature type="chain" id="PRO_1000212959" description="Protein ApaG">
    <location>
        <begin position="1"/>
        <end position="127"/>
    </location>
</feature>
<feature type="domain" description="ApaG" evidence="1">
    <location>
        <begin position="3"/>
        <end position="127"/>
    </location>
</feature>
<name>APAG_METFK</name>
<proteinExistence type="inferred from homology"/>
<sequence>MTKDKRYAFSVKVETAFVPDQSDVEQNRYVFTYTVHIENTGNVAAQLISRHWIITDATGKTQEVRGLGVIGQQPLLQPGERFQYTSGTMLNTPVGEMRGFYHITAEDGTQFDSEIAPFQLNMPRVLH</sequence>
<organism>
    <name type="scientific">Methylobacillus flagellatus (strain ATCC 51484 / DSM 6875 / VKM B-1610 / KT)</name>
    <dbReference type="NCBI Taxonomy" id="265072"/>
    <lineage>
        <taxon>Bacteria</taxon>
        <taxon>Pseudomonadati</taxon>
        <taxon>Pseudomonadota</taxon>
        <taxon>Betaproteobacteria</taxon>
        <taxon>Nitrosomonadales</taxon>
        <taxon>Methylophilaceae</taxon>
        <taxon>Methylobacillus</taxon>
    </lineage>
</organism>
<reference key="1">
    <citation type="submission" date="2006-03" db="EMBL/GenBank/DDBJ databases">
        <title>Complete sequence of Methylobacillus flagellatus KT.</title>
        <authorList>
            <consortium name="US DOE Joint Genome Institute"/>
            <person name="Copeland A."/>
            <person name="Lucas S."/>
            <person name="Lapidus A."/>
            <person name="Barry K."/>
            <person name="Detter J.C."/>
            <person name="Glavina del Rio T."/>
            <person name="Hammon N."/>
            <person name="Israni S."/>
            <person name="Dalin E."/>
            <person name="Tice H."/>
            <person name="Pitluck S."/>
            <person name="Brettin T."/>
            <person name="Bruce D."/>
            <person name="Han C."/>
            <person name="Tapia R."/>
            <person name="Saunders E."/>
            <person name="Gilna P."/>
            <person name="Schmutz J."/>
            <person name="Larimer F."/>
            <person name="Land M."/>
            <person name="Kyrpides N."/>
            <person name="Anderson I."/>
            <person name="Richardson P."/>
        </authorList>
    </citation>
    <scope>NUCLEOTIDE SEQUENCE [LARGE SCALE GENOMIC DNA]</scope>
    <source>
        <strain>ATCC 51484 / DSM 6875 / VKM B-1610 / KT</strain>
    </source>
</reference>
<dbReference type="EMBL" id="CP000284">
    <property type="protein sequence ID" value="ABE50899.1"/>
    <property type="molecule type" value="Genomic_DNA"/>
</dbReference>
<dbReference type="RefSeq" id="WP_011480852.1">
    <property type="nucleotide sequence ID" value="NC_007947.1"/>
</dbReference>
<dbReference type="SMR" id="Q1GXY8"/>
<dbReference type="STRING" id="265072.Mfla_2636"/>
<dbReference type="KEGG" id="mfa:Mfla_2636"/>
<dbReference type="eggNOG" id="COG2967">
    <property type="taxonomic scope" value="Bacteria"/>
</dbReference>
<dbReference type="HOGENOM" id="CLU_128074_1_0_4"/>
<dbReference type="OrthoDB" id="9795226at2"/>
<dbReference type="Proteomes" id="UP000002440">
    <property type="component" value="Chromosome"/>
</dbReference>
<dbReference type="GO" id="GO:0070987">
    <property type="term" value="P:error-free translesion synthesis"/>
    <property type="evidence" value="ECO:0007669"/>
    <property type="project" value="TreeGrafter"/>
</dbReference>
<dbReference type="Gene3D" id="2.60.40.1470">
    <property type="entry name" value="ApaG domain"/>
    <property type="match status" value="1"/>
</dbReference>
<dbReference type="HAMAP" id="MF_00791">
    <property type="entry name" value="ApaG"/>
    <property type="match status" value="1"/>
</dbReference>
<dbReference type="InterPro" id="IPR007474">
    <property type="entry name" value="ApaG_domain"/>
</dbReference>
<dbReference type="InterPro" id="IPR036767">
    <property type="entry name" value="ApaG_sf"/>
</dbReference>
<dbReference type="InterPro" id="IPR023065">
    <property type="entry name" value="Uncharacterised_ApaG"/>
</dbReference>
<dbReference type="NCBIfam" id="NF003967">
    <property type="entry name" value="PRK05461.1"/>
    <property type="match status" value="1"/>
</dbReference>
<dbReference type="PANTHER" id="PTHR14289">
    <property type="entry name" value="F-BOX ONLY PROTEIN 3"/>
    <property type="match status" value="1"/>
</dbReference>
<dbReference type="PANTHER" id="PTHR14289:SF16">
    <property type="entry name" value="POLYMERASE DELTA-INTERACTING PROTEIN 2"/>
    <property type="match status" value="1"/>
</dbReference>
<dbReference type="Pfam" id="PF04379">
    <property type="entry name" value="DUF525"/>
    <property type="match status" value="1"/>
</dbReference>
<dbReference type="SUPFAM" id="SSF110069">
    <property type="entry name" value="ApaG-like"/>
    <property type="match status" value="1"/>
</dbReference>
<dbReference type="PROSITE" id="PS51087">
    <property type="entry name" value="APAG"/>
    <property type="match status" value="1"/>
</dbReference>
<gene>
    <name evidence="1" type="primary">apaG</name>
    <name type="ordered locus">Mfla_2636</name>
</gene>
<keyword id="KW-1185">Reference proteome</keyword>
<protein>
    <recommendedName>
        <fullName evidence="1">Protein ApaG</fullName>
    </recommendedName>
</protein>